<organism>
    <name type="scientific">Shigella boydii serotype 18 (strain CDC 3083-94 / BS512)</name>
    <dbReference type="NCBI Taxonomy" id="344609"/>
    <lineage>
        <taxon>Bacteria</taxon>
        <taxon>Pseudomonadati</taxon>
        <taxon>Pseudomonadota</taxon>
        <taxon>Gammaproteobacteria</taxon>
        <taxon>Enterobacterales</taxon>
        <taxon>Enterobacteriaceae</taxon>
        <taxon>Shigella</taxon>
    </lineage>
</organism>
<dbReference type="EC" id="2.7.8.20" evidence="1"/>
<dbReference type="EMBL" id="CP001063">
    <property type="protein sequence ID" value="ACD07405.1"/>
    <property type="molecule type" value="Genomic_DNA"/>
</dbReference>
<dbReference type="RefSeq" id="WP_001292641.1">
    <property type="nucleotide sequence ID" value="NC_010658.1"/>
</dbReference>
<dbReference type="SMR" id="B2TZP2"/>
<dbReference type="STRING" id="344609.SbBS512_E4899"/>
<dbReference type="KEGG" id="sbc:SbBS512_E4899"/>
<dbReference type="HOGENOM" id="CLU_023986_1_0_6"/>
<dbReference type="UniPathway" id="UPA00637"/>
<dbReference type="Proteomes" id="UP000001030">
    <property type="component" value="Chromosome"/>
</dbReference>
<dbReference type="GO" id="GO:0005886">
    <property type="term" value="C:plasma membrane"/>
    <property type="evidence" value="ECO:0007669"/>
    <property type="project" value="UniProtKB-SubCell"/>
</dbReference>
<dbReference type="GO" id="GO:0008960">
    <property type="term" value="F:phosphatidylglycerol-membrane-oligosaccharide glycerophosphotransferase activity"/>
    <property type="evidence" value="ECO:0007669"/>
    <property type="project" value="UniProtKB-UniRule"/>
</dbReference>
<dbReference type="GO" id="GO:0009250">
    <property type="term" value="P:glucan biosynthetic process"/>
    <property type="evidence" value="ECO:0007669"/>
    <property type="project" value="UniProtKB-UniRule"/>
</dbReference>
<dbReference type="CDD" id="cd16015">
    <property type="entry name" value="LTA_synthase"/>
    <property type="match status" value="1"/>
</dbReference>
<dbReference type="FunFam" id="3.40.720.10:FF:000009">
    <property type="entry name" value="Phosphoglycerol transferase I"/>
    <property type="match status" value="1"/>
</dbReference>
<dbReference type="Gene3D" id="3.40.720.10">
    <property type="entry name" value="Alkaline Phosphatase, subunit A"/>
    <property type="match status" value="1"/>
</dbReference>
<dbReference type="HAMAP" id="MF_01070">
    <property type="entry name" value="MdoB_OpgB"/>
    <property type="match status" value="1"/>
</dbReference>
<dbReference type="InterPro" id="IPR017850">
    <property type="entry name" value="Alkaline_phosphatase_core_sf"/>
</dbReference>
<dbReference type="InterPro" id="IPR054288">
    <property type="entry name" value="DUF7024"/>
</dbReference>
<dbReference type="InterPro" id="IPR020881">
    <property type="entry name" value="OpgB"/>
</dbReference>
<dbReference type="InterPro" id="IPR050448">
    <property type="entry name" value="OpgB/LTA_synthase_biosynth"/>
</dbReference>
<dbReference type="InterPro" id="IPR000917">
    <property type="entry name" value="Sulfatase_N"/>
</dbReference>
<dbReference type="NCBIfam" id="NF003000">
    <property type="entry name" value="PRK03776.1"/>
    <property type="match status" value="1"/>
</dbReference>
<dbReference type="PANTHER" id="PTHR47371">
    <property type="entry name" value="LIPOTEICHOIC ACID SYNTHASE"/>
    <property type="match status" value="1"/>
</dbReference>
<dbReference type="PANTHER" id="PTHR47371:SF3">
    <property type="entry name" value="PHOSPHOGLYCEROL TRANSFERASE I"/>
    <property type="match status" value="1"/>
</dbReference>
<dbReference type="Pfam" id="PF22895">
    <property type="entry name" value="DUF7024"/>
    <property type="match status" value="1"/>
</dbReference>
<dbReference type="Pfam" id="PF00884">
    <property type="entry name" value="Sulfatase"/>
    <property type="match status" value="1"/>
</dbReference>
<dbReference type="SUPFAM" id="SSF53649">
    <property type="entry name" value="Alkaline phosphatase-like"/>
    <property type="match status" value="1"/>
</dbReference>
<sequence length="763" mass="85445">MSELLSFALFLASVLIYAWKAGRNTWWFAATLTVLGLFVVLNITLFASDYFTGDGINDAVLYTLTNSLTGAGVSKYILPGIGIVLGLTAVFGALGWILRHRRHHPHHFGYSLLALLLALGSVDASPAFRQITELVKSQSRDGDPDFAAYYKEPSKTIPDPKLNLVYIYGESLERTYFDNEAFPDLTPELGALKNEGLDFSHTQQLPGTDYTIAGMVASQCGIPLFAPFEGNASASVSSFFPQNICLGDILKNSGYQNYFVQGANLRFAGKDVFLKSHGFDHLYGSEELKSVVADPHYRNDWGFYDDTVLDEAWKKFEELSRSGQRFSLFTLTVDTHHPDGFISRTCNRKKYDFDGKPNQSFSAVSCSQENIAAFINKIKASPWFKDTVIVVSSDHLAMNNTAWKYLNKQDRNNLFFVIRGDKPQQETLAVKRNTMDNGATVLDILGGDNYLGLGRSSLSGQSMSEIFLNIKEKTLAWKPDIIRLWKFPKEMKEFTIDQQKNMIAFSGSHFRLPLLLRVSDKRVEPLPESEYSAPLRFQLADFAPRDNFVWVDRCYKMAQLWAPELALSTDWCVSQGQLGGQQIVQHVDKTTWQGKTAFKDTVIDMARYKGNVDTLKIVDNDIRYKADSFIFNVAGAPEEVKQFSGISRPESWGRWSNAQLGDEVKIEYKHPLPKKFDLVITAKAYGNNASRPIPVRVGNEEQTLVLGNEVTTTTLHFDNPTDADTLVIVPPEPVSTNEGNILGHSPRKLGIGMVEIKVVEREG</sequence>
<accession>B2TZP2</accession>
<protein>
    <recommendedName>
        <fullName evidence="1">Phosphoglycerol transferase I</fullName>
        <ecNumber evidence="1">2.7.8.20</ecNumber>
    </recommendedName>
    <alternativeName>
        <fullName evidence="1">Phosphatidylglycerol--membrane-oligosaccharide glycerophosphotransferase</fullName>
    </alternativeName>
</protein>
<gene>
    <name evidence="1" type="primary">mdoB</name>
    <name evidence="1" type="synonym">opgB</name>
    <name type="ordered locus">SbBS512_E4899</name>
</gene>
<evidence type="ECO:0000255" key="1">
    <source>
        <dbReference type="HAMAP-Rule" id="MF_01070"/>
    </source>
</evidence>
<reference key="1">
    <citation type="submission" date="2008-05" db="EMBL/GenBank/DDBJ databases">
        <title>Complete sequence of Shigella boydii serotype 18 strain BS512.</title>
        <authorList>
            <person name="Rasko D.A."/>
            <person name="Rosovitz M."/>
            <person name="Maurelli A.T."/>
            <person name="Myers G."/>
            <person name="Seshadri R."/>
            <person name="Cer R."/>
            <person name="Jiang L."/>
            <person name="Ravel J."/>
            <person name="Sebastian Y."/>
        </authorList>
    </citation>
    <scope>NUCLEOTIDE SEQUENCE [LARGE SCALE GENOMIC DNA]</scope>
    <source>
        <strain>CDC 3083-94 / BS512</strain>
    </source>
</reference>
<keyword id="KW-0997">Cell inner membrane</keyword>
<keyword id="KW-1003">Cell membrane</keyword>
<keyword id="KW-0472">Membrane</keyword>
<keyword id="KW-1185">Reference proteome</keyword>
<keyword id="KW-0808">Transferase</keyword>
<keyword id="KW-0812">Transmembrane</keyword>
<keyword id="KW-1133">Transmembrane helix</keyword>
<name>OPGB_SHIB3</name>
<feature type="chain" id="PRO_1000136633" description="Phosphoglycerol transferase I">
    <location>
        <begin position="1"/>
        <end position="763"/>
    </location>
</feature>
<feature type="transmembrane region" description="Helical" evidence="1">
    <location>
        <begin position="1"/>
        <end position="21"/>
    </location>
</feature>
<feature type="transmembrane region" description="Helical" evidence="1">
    <location>
        <begin position="26"/>
        <end position="46"/>
    </location>
</feature>
<feature type="transmembrane region" description="Helical" evidence="1">
    <location>
        <begin position="77"/>
        <end position="97"/>
    </location>
</feature>
<feature type="transmembrane region" description="Helical" evidence="1">
    <location>
        <begin position="108"/>
        <end position="128"/>
    </location>
</feature>
<comment type="function">
    <text evidence="1">Transfers a phosphoglycerol residue from phosphatidylglycerol to the membrane-bound nascent glucan backbones.</text>
</comment>
<comment type="catalytic activity">
    <reaction evidence="1">
        <text>a phosphatidylglycerol + a membrane-derived-oligosaccharide D-glucose = a 1,2-diacyl-sn-glycerol + a membrane-derived-oligosaccharide 6-(glycerophospho)-D-glucose.</text>
        <dbReference type="EC" id="2.7.8.20"/>
    </reaction>
</comment>
<comment type="pathway">
    <text evidence="1">Glycan metabolism; osmoregulated periplasmic glucan (OPG) biosynthesis.</text>
</comment>
<comment type="subcellular location">
    <subcellularLocation>
        <location evidence="1">Cell inner membrane</location>
        <topology evidence="1">Multi-pass membrane protein</topology>
    </subcellularLocation>
</comment>
<comment type="similarity">
    <text evidence="1">Belongs to the OpgB family.</text>
</comment>
<proteinExistence type="inferred from homology"/>